<evidence type="ECO:0000255" key="1">
    <source>
        <dbReference type="HAMAP-Rule" id="MF_01026"/>
    </source>
</evidence>
<evidence type="ECO:0000256" key="2">
    <source>
        <dbReference type="SAM" id="MobiDB-lite"/>
    </source>
</evidence>
<comment type="function">
    <text>Catalyzes the isomerization between 2-isopropylmalate and 3-isopropylmalate, via the formation of 2-isopropylmaleate.</text>
</comment>
<comment type="catalytic activity">
    <reaction evidence="1">
        <text>(2R,3S)-3-isopropylmalate = (2S)-2-isopropylmalate</text>
        <dbReference type="Rhea" id="RHEA:32287"/>
        <dbReference type="ChEBI" id="CHEBI:1178"/>
        <dbReference type="ChEBI" id="CHEBI:35121"/>
        <dbReference type="EC" id="4.2.1.33"/>
    </reaction>
</comment>
<comment type="cofactor">
    <cofactor evidence="1">
        <name>[4Fe-4S] cluster</name>
        <dbReference type="ChEBI" id="CHEBI:49883"/>
    </cofactor>
    <text evidence="1">Binds 1 [4Fe-4S] cluster per subunit.</text>
</comment>
<comment type="pathway">
    <text evidence="1">Amino-acid biosynthesis; L-leucine biosynthesis; L-leucine from 3-methyl-2-oxobutanoate: step 2/4.</text>
</comment>
<comment type="subunit">
    <text evidence="1">Heterodimer of LeuC and LeuD.</text>
</comment>
<comment type="similarity">
    <text evidence="1">Belongs to the aconitase/IPM isomerase family. LeuC type 1 subfamily.</text>
</comment>
<feature type="chain" id="PRO_0000076692" description="3-isopropylmalate dehydratase large subunit">
    <location>
        <begin position="1"/>
        <end position="470"/>
    </location>
</feature>
<feature type="region of interest" description="Disordered" evidence="2">
    <location>
        <begin position="50"/>
        <end position="121"/>
    </location>
</feature>
<feature type="binding site" evidence="1">
    <location>
        <position position="349"/>
    </location>
    <ligand>
        <name>[4Fe-4S] cluster</name>
        <dbReference type="ChEBI" id="CHEBI:49883"/>
    </ligand>
</feature>
<feature type="binding site" evidence="1">
    <location>
        <position position="409"/>
    </location>
    <ligand>
        <name>[4Fe-4S] cluster</name>
        <dbReference type="ChEBI" id="CHEBI:49883"/>
    </ligand>
</feature>
<feature type="binding site" evidence="1">
    <location>
        <position position="412"/>
    </location>
    <ligand>
        <name>[4Fe-4S] cluster</name>
        <dbReference type="ChEBI" id="CHEBI:49883"/>
    </ligand>
</feature>
<dbReference type="EC" id="4.2.1.33" evidence="1"/>
<dbReference type="EMBL" id="Y11280">
    <property type="protein sequence ID" value="CAA72149.1"/>
    <property type="molecule type" value="Genomic_DNA"/>
</dbReference>
<dbReference type="SMR" id="P96195"/>
<dbReference type="UniPathway" id="UPA00048">
    <property type="reaction ID" value="UER00071"/>
</dbReference>
<dbReference type="GO" id="GO:0003861">
    <property type="term" value="F:3-isopropylmalate dehydratase activity"/>
    <property type="evidence" value="ECO:0007669"/>
    <property type="project" value="UniProtKB-UniRule"/>
</dbReference>
<dbReference type="GO" id="GO:0051539">
    <property type="term" value="F:4 iron, 4 sulfur cluster binding"/>
    <property type="evidence" value="ECO:0007669"/>
    <property type="project" value="UniProtKB-KW"/>
</dbReference>
<dbReference type="GO" id="GO:0046872">
    <property type="term" value="F:metal ion binding"/>
    <property type="evidence" value="ECO:0007669"/>
    <property type="project" value="UniProtKB-KW"/>
</dbReference>
<dbReference type="GO" id="GO:0009098">
    <property type="term" value="P:L-leucine biosynthetic process"/>
    <property type="evidence" value="ECO:0007669"/>
    <property type="project" value="UniProtKB-UniRule"/>
</dbReference>
<dbReference type="Gene3D" id="3.30.499.10">
    <property type="entry name" value="Aconitase, domain 3"/>
    <property type="match status" value="2"/>
</dbReference>
<dbReference type="HAMAP" id="MF_01026">
    <property type="entry name" value="LeuC_type1"/>
    <property type="match status" value="1"/>
</dbReference>
<dbReference type="InterPro" id="IPR004430">
    <property type="entry name" value="3-IsopropMal_deHydase_lsu"/>
</dbReference>
<dbReference type="InterPro" id="IPR015931">
    <property type="entry name" value="Acnase/IPM_dHydase_lsu_aba_1/3"/>
</dbReference>
<dbReference type="InterPro" id="IPR001030">
    <property type="entry name" value="Acoase/IPM_deHydtase_lsu_aba"/>
</dbReference>
<dbReference type="InterPro" id="IPR018136">
    <property type="entry name" value="Aconitase_4Fe-4S_BS"/>
</dbReference>
<dbReference type="InterPro" id="IPR036008">
    <property type="entry name" value="Aconitase_4Fe-4S_dom"/>
</dbReference>
<dbReference type="InterPro" id="IPR050067">
    <property type="entry name" value="IPM_dehydratase_rel_enz"/>
</dbReference>
<dbReference type="NCBIfam" id="NF004016">
    <property type="entry name" value="PRK05478.1"/>
    <property type="match status" value="1"/>
</dbReference>
<dbReference type="NCBIfam" id="NF009116">
    <property type="entry name" value="PRK12466.1"/>
    <property type="match status" value="1"/>
</dbReference>
<dbReference type="PANTHER" id="PTHR43822:SF9">
    <property type="entry name" value="3-ISOPROPYLMALATE DEHYDRATASE"/>
    <property type="match status" value="1"/>
</dbReference>
<dbReference type="PANTHER" id="PTHR43822">
    <property type="entry name" value="HOMOACONITASE, MITOCHONDRIAL-RELATED"/>
    <property type="match status" value="1"/>
</dbReference>
<dbReference type="Pfam" id="PF00330">
    <property type="entry name" value="Aconitase"/>
    <property type="match status" value="1"/>
</dbReference>
<dbReference type="PRINTS" id="PR00415">
    <property type="entry name" value="ACONITASE"/>
</dbReference>
<dbReference type="SUPFAM" id="SSF53732">
    <property type="entry name" value="Aconitase iron-sulfur domain"/>
    <property type="match status" value="1"/>
</dbReference>
<dbReference type="PROSITE" id="PS00450">
    <property type="entry name" value="ACONITASE_1"/>
    <property type="match status" value="1"/>
</dbReference>
<reference key="1">
    <citation type="journal article" date="1997" name="Mol. Gen. Genet.">
        <title>Characterization and mutagenesis of the leucine biosynthetic genes of Azotobacter vinelandii: an analysis of the rarity of amino acid auxotrophs.</title>
        <authorList>
            <person name="Manna A.C."/>
            <person name="Das H.K."/>
        </authorList>
    </citation>
    <scope>NUCLEOTIDE SEQUENCE [GENOMIC DNA]</scope>
    <source>
        <strain>ATCC 13705 / OP1 / DSM 366 / NCIMB 11614 / LMG 3878 / UW</strain>
    </source>
</reference>
<name>LEUC_AZOVI</name>
<accession>P96195</accession>
<protein>
    <recommendedName>
        <fullName evidence="1">3-isopropylmalate dehydratase large subunit</fullName>
        <ecNumber evidence="1">4.2.1.33</ecNumber>
    </recommendedName>
    <alternativeName>
        <fullName evidence="1">Alpha-IPM isomerase</fullName>
        <shortName evidence="1">IPMI</shortName>
    </alternativeName>
    <alternativeName>
        <fullName evidence="1">Isopropylmalate isomerase</fullName>
    </alternativeName>
</protein>
<sequence>MAGKTLYDKLWDMHEVKRRDDGSSLIYIDRQILHEVTSPQVRGAAPGRANVARGCQHRHPGPQRADHPGSPVGGRRHRRRNLAHPGADPGRELRRVRHRRVQDERPAPGHRPCGRPGAGRHLPGMTVVCGDSHTSTHWCGALAHGIGTSEVEHVLATQCLVAKKMKNMQVRVEGELPLGVSAKDIVLAVIGRIGTAGGTGHALEFAGSAIRGLSMEGRMTLCNMAIEAGARVGMVAVDEKTIDYVKGRPYAPQGADWDKAVAQWRELVSDADAGFDTVVELKAEEIRPQVTWGTSPEMVLPVDERVPDPASESDPVKRDSIVRALKYMGLAANQPIGEIKVDRVFIGSCTNSRIEDLRAAAEVAKGARSPRASSRRWWCRAPGWSRSRRRRRGWTGSSSRPVSSGATGCSMCLAMNPDRLESGEHCASTSNRNFEGRQGAGGRTHLVSPAMAAAAAVAGRFVDVRQLLQA</sequence>
<proteinExistence type="inferred from homology"/>
<gene>
    <name evidence="1" type="primary">leuC</name>
</gene>
<organism>
    <name type="scientific">Azotobacter vinelandii</name>
    <dbReference type="NCBI Taxonomy" id="354"/>
    <lineage>
        <taxon>Bacteria</taxon>
        <taxon>Pseudomonadati</taxon>
        <taxon>Pseudomonadota</taxon>
        <taxon>Gammaproteobacteria</taxon>
        <taxon>Pseudomonadales</taxon>
        <taxon>Pseudomonadaceae</taxon>
        <taxon>Azotobacter</taxon>
    </lineage>
</organism>
<keyword id="KW-0004">4Fe-4S</keyword>
<keyword id="KW-0028">Amino-acid biosynthesis</keyword>
<keyword id="KW-0100">Branched-chain amino acid biosynthesis</keyword>
<keyword id="KW-0408">Iron</keyword>
<keyword id="KW-0411">Iron-sulfur</keyword>
<keyword id="KW-0432">Leucine biosynthesis</keyword>
<keyword id="KW-0456">Lyase</keyword>
<keyword id="KW-0479">Metal-binding</keyword>